<dbReference type="EMBL" id="KC439347">
    <property type="protein sequence ID" value="AGO86667.1"/>
    <property type="molecule type" value="Genomic_DNA"/>
</dbReference>
<dbReference type="GO" id="GO:0005634">
    <property type="term" value="C:nucleus"/>
    <property type="evidence" value="ECO:0007669"/>
    <property type="project" value="UniProtKB-SubCell"/>
</dbReference>
<dbReference type="GO" id="GO:0003677">
    <property type="term" value="F:DNA binding"/>
    <property type="evidence" value="ECO:0007669"/>
    <property type="project" value="UniProtKB-KW"/>
</dbReference>
<dbReference type="GO" id="GO:0000981">
    <property type="term" value="F:DNA-binding transcription factor activity, RNA polymerase II-specific"/>
    <property type="evidence" value="ECO:0007669"/>
    <property type="project" value="InterPro"/>
</dbReference>
<dbReference type="GO" id="GO:0008270">
    <property type="term" value="F:zinc ion binding"/>
    <property type="evidence" value="ECO:0007669"/>
    <property type="project" value="InterPro"/>
</dbReference>
<dbReference type="CDD" id="cd00067">
    <property type="entry name" value="GAL4"/>
    <property type="match status" value="1"/>
</dbReference>
<dbReference type="Gene3D" id="4.10.240.10">
    <property type="entry name" value="Zn(2)-C6 fungal-type DNA-binding domain"/>
    <property type="match status" value="1"/>
</dbReference>
<dbReference type="InterPro" id="IPR050797">
    <property type="entry name" value="Carb_Metab_Trans_Reg"/>
</dbReference>
<dbReference type="InterPro" id="IPR036864">
    <property type="entry name" value="Zn2-C6_fun-type_DNA-bd_sf"/>
</dbReference>
<dbReference type="InterPro" id="IPR001138">
    <property type="entry name" value="Zn2Cys6_DnaBD"/>
</dbReference>
<dbReference type="PANTHER" id="PTHR31668">
    <property type="entry name" value="GLUCOSE TRANSPORT TRANSCRIPTION REGULATOR RGT1-RELATED-RELATED"/>
    <property type="match status" value="1"/>
</dbReference>
<dbReference type="SMART" id="SM00066">
    <property type="entry name" value="GAL4"/>
    <property type="match status" value="1"/>
</dbReference>
<dbReference type="SUPFAM" id="SSF57701">
    <property type="entry name" value="Zn2/Cys6 DNA-binding domain"/>
    <property type="match status" value="1"/>
</dbReference>
<dbReference type="PROSITE" id="PS50048">
    <property type="entry name" value="ZN2_CY6_FUNGAL_2"/>
    <property type="match status" value="1"/>
</dbReference>
<accession>S4W177</accession>
<keyword id="KW-0238">DNA-binding</keyword>
<keyword id="KW-0479">Metal-binding</keyword>
<keyword id="KW-0539">Nucleus</keyword>
<keyword id="KW-0804">Transcription</keyword>
<keyword id="KW-0805">Transcription regulation</keyword>
<keyword id="KW-0862">Zinc</keyword>
<protein>
    <recommendedName>
        <fullName evidence="3">Equisetin cluster transcription factor eqxR</fullName>
    </recommendedName>
    <alternativeName>
        <fullName evidence="3">Equisetin biosynthesis protein R</fullName>
    </alternativeName>
</protein>
<reference key="1">
    <citation type="journal article" date="2013" name="ACS Chem. Biol.">
        <title>Two related pyrrolidinedione synthetase loci in Fusarium heterosporum ATCC 74349 produce divergent metabolites.</title>
        <authorList>
            <person name="Kakule T.B."/>
            <person name="Sardar D."/>
            <person name="Lin Z."/>
            <person name="Schmidt E.W."/>
        </authorList>
    </citation>
    <scope>NUCLEOTIDE SEQUENCE [GENOMIC DNA]</scope>
    <scope>FUNCTION</scope>
    <scope>PATHWAY</scope>
    <source>
        <strain>ATCC 74349 / MF6069</strain>
    </source>
</reference>
<reference key="2">
    <citation type="journal article" date="2015" name="ACS Synth. Biol.">
        <title>Native promoter strategy for high-yielding synthesis and engineering of fungal secondary metabolites.</title>
        <authorList>
            <person name="Kakule T.B."/>
            <person name="Jadulco R.C."/>
            <person name="Koch M."/>
            <person name="Janso J.E."/>
            <person name="Barrows L.R."/>
            <person name="Schmidt E.W."/>
        </authorList>
    </citation>
    <scope>FUNCTION</scope>
</reference>
<proteinExistence type="inferred from homology"/>
<organism>
    <name type="scientific">Fusarium heterosporum</name>
    <dbReference type="NCBI Taxonomy" id="42747"/>
    <lineage>
        <taxon>Eukaryota</taxon>
        <taxon>Fungi</taxon>
        <taxon>Dikarya</taxon>
        <taxon>Ascomycota</taxon>
        <taxon>Pezizomycotina</taxon>
        <taxon>Sordariomycetes</taxon>
        <taxon>Hypocreomycetidae</taxon>
        <taxon>Hypocreales</taxon>
        <taxon>Nectriaceae</taxon>
        <taxon>Fusarium</taxon>
        <taxon>Fusarium heterosporum species complex</taxon>
    </lineage>
</organism>
<name>EQXR_FUSHE</name>
<feature type="chain" id="PRO_0000441304" description="Equisetin cluster transcription factor eqxR">
    <location>
        <begin position="1"/>
        <end position="469"/>
    </location>
</feature>
<feature type="DNA-binding region" description="Zn(2)-C6 fungal-type" evidence="1">
    <location>
        <begin position="13"/>
        <end position="47"/>
    </location>
</feature>
<feature type="region of interest" description="Disordered" evidence="2">
    <location>
        <begin position="58"/>
        <end position="84"/>
    </location>
</feature>
<feature type="compositionally biased region" description="Polar residues" evidence="2">
    <location>
        <begin position="68"/>
        <end position="82"/>
    </location>
</feature>
<evidence type="ECO:0000255" key="1">
    <source>
        <dbReference type="PROSITE-ProRule" id="PRU00227"/>
    </source>
</evidence>
<evidence type="ECO:0000256" key="2">
    <source>
        <dbReference type="SAM" id="MobiDB-lite"/>
    </source>
</evidence>
<evidence type="ECO:0000303" key="3">
    <source>
    </source>
</evidence>
<evidence type="ECO:0000305" key="4">
    <source>
    </source>
</evidence>
<sequence>MSTQNNQSIRSSCDRCRSHKLKCTVAPENSRSGSNRCTRCIRAQVTCVFGHRSQSKRSTNVKKADIKSGTNSQETTSMQASTIVPGRVSVSPDLWVGRQEVEEGLPIGSDGGPSMGDGDLWAELGTNHDLNVFDLTPSSLPTYNSQQQFSATDFCSAPMVPHSDLSAINSQEWQFDVSEHPDQTTTAPHVIVQLSALVTNIHETSKSLGESFWASLAESSQLKNYPIGRVLSLSQDFTAILECIWMSKTMDYKQSSSFVTSESDGQDGISSFELEDVLDYGELLSTVGTSPGRSDFSTSTHSSVATAVDMPTMLLVLSCYTSLTKLYSLVFEHFESHLSHLPHSYTSPTSHTSPRWGLGLQLGELPSADETCTKVYTAVQILLDAFQSVEDVVGLPRSLSAVRQQTCGKEEEAESGDVFNRASLWTDFLAKSVFKATVKGTSEEDCEEIRQLSIKVKSLKALIRERMKL</sequence>
<comment type="function">
    <text evidence="4">Transcription factor that regulates the expression of the gene cluster that mediates the biosynthesis of Equisetin (PubMed:23614392).</text>
</comment>
<comment type="subcellular location">
    <subcellularLocation>
        <location evidence="1">Nucleus</location>
    </subcellularLocation>
</comment>
<gene>
    <name evidence="3" type="primary">eqxR</name>
</gene>